<feature type="chain" id="PRO_0000096934" description="Nucleolar protein 11">
    <location>
        <begin position="1"/>
        <end position="720"/>
    </location>
</feature>
<feature type="region of interest" description="Disordered" evidence="2">
    <location>
        <begin position="365"/>
        <end position="392"/>
    </location>
</feature>
<name>NOL11_XENLA</name>
<proteinExistence type="evidence at transcript level"/>
<reference key="1">
    <citation type="submission" date="2005-04" db="EMBL/GenBank/DDBJ databases">
        <authorList>
            <consortium name="NIH - Xenopus Gene Collection (XGC) project"/>
        </authorList>
    </citation>
    <scope>NUCLEOTIDE SEQUENCE [LARGE SCALE MRNA]</scope>
    <source>
        <tissue>Embryo</tissue>
        <tissue>Eye</tissue>
    </source>
</reference>
<evidence type="ECO:0000250" key="1">
    <source>
        <dbReference type="UniProtKB" id="Q9H8H0"/>
    </source>
</evidence>
<evidence type="ECO:0000256" key="2">
    <source>
        <dbReference type="SAM" id="MobiDB-lite"/>
    </source>
</evidence>
<evidence type="ECO:0000305" key="3"/>
<comment type="function">
    <text evidence="1">Ribosome biogenesis factor. May be required for both optimal rDNA transcription and pre-rRNA processing (By similarity).</text>
</comment>
<comment type="subcellular location">
    <subcellularLocation>
        <location evidence="1">Nucleus</location>
        <location evidence="1">Nucleolus</location>
    </subcellularLocation>
</comment>
<comment type="sequence caution" evidence="3">
    <conflict type="erroneous initiation">
        <sequence resource="EMBL-CDS" id="AAH72295"/>
    </conflict>
</comment>
<comment type="sequence caution" evidence="3">
    <conflict type="erroneous initiation">
        <sequence resource="EMBL-CDS" id="AAH94122"/>
    </conflict>
</comment>
<sequence>MAALSEHFTLCGLLTGTDDGKSEILGVEPAGEPDRVLVTDSVQAVTLYKVSDQKPQGAWAVKQGQSITCPAVLNPESGEFIVVHDDKVLRIWKEDNVNLDIAFKATLSADVCRIHTLPNTDPLVLFKGGAVHFLDSLLTDPQQKIGTVLSDGERIVWSEIFADDGQPLIVYLTQQFSNYFVYIHKFSPVCVCKYHLKPNTEDSTILDCSGSVKSKIFTLLTLYSSGQVCQTPFPVSLINKETERVVSASPLLQLSGPIEVGALNFLDESHVAVLISSSSEQKECLSIWNTTFQTLQAARNFQQRTSAQLWCYDNKLFVPHGKTLVVVPYVCEASCLASVLGKSRNIQTSVLENVPFVNWDKLVGKDPETKPSNAGAQKKTRERKTNANAGNGTESILYPFDVQNISQTQTEAFVQQLLLGKEDTDFQITVGKITQGLVKRCMADPKFYPQSSFVQLVQTNTLSYSLCPDLLSLFLEKRDVPLLQLCLHSFPDVPEVILCSCLKAFLSISEKLVNAAQINTELASLYIDVGDKDKEHKYTEHPEEPSVLQNGFSPTALEEDSCDELIAESLPQTTQKATCPISIKRAVLVNSILISPYNESFLLPHLKDMSGDQVMFFLRYLLYLYLKFNENITINHPGKQMPTVSQIVDWMSMLLDAHFATVVMLSDAKALLNKIQKTVKSQLKFYSEMNKIEGCLAELKELKCPARVSARYSIEVLQLY</sequence>
<protein>
    <recommendedName>
        <fullName>Nucleolar protein 11</fullName>
    </recommendedName>
</protein>
<gene>
    <name type="primary">nol11</name>
</gene>
<keyword id="KW-0010">Activator</keyword>
<keyword id="KW-0539">Nucleus</keyword>
<keyword id="KW-1185">Reference proteome</keyword>
<keyword id="KW-0690">Ribosome biogenesis</keyword>
<keyword id="KW-0698">rRNA processing</keyword>
<keyword id="KW-0804">Transcription</keyword>
<keyword id="KW-0805">Transcription regulation</keyword>
<dbReference type="EMBL" id="BC072295">
    <property type="protein sequence ID" value="AAH72295.1"/>
    <property type="status" value="ALT_INIT"/>
    <property type="molecule type" value="mRNA"/>
</dbReference>
<dbReference type="EMBL" id="BC094122">
    <property type="protein sequence ID" value="AAH94122.1"/>
    <property type="status" value="ALT_INIT"/>
    <property type="molecule type" value="mRNA"/>
</dbReference>
<dbReference type="SMR" id="Q6INI5"/>
<dbReference type="AGR" id="Xenbase:XB-GENE-17339654"/>
<dbReference type="Xenbase" id="XB-GENE-17339654">
    <property type="gene designation" value="nol11.S"/>
</dbReference>
<dbReference type="Proteomes" id="UP000186698">
    <property type="component" value="Unplaced"/>
</dbReference>
<dbReference type="GO" id="GO:0005730">
    <property type="term" value="C:nucleolus"/>
    <property type="evidence" value="ECO:0000250"/>
    <property type="project" value="UniProtKB"/>
</dbReference>
<dbReference type="GO" id="GO:0003723">
    <property type="term" value="F:RNA binding"/>
    <property type="evidence" value="ECO:0007669"/>
    <property type="project" value="TreeGrafter"/>
</dbReference>
<dbReference type="GO" id="GO:0030490">
    <property type="term" value="P:maturation of SSU-rRNA"/>
    <property type="evidence" value="ECO:0000250"/>
    <property type="project" value="UniProtKB"/>
</dbReference>
<dbReference type="GO" id="GO:1901838">
    <property type="term" value="P:positive regulation of transcription of nucleolar large rRNA by RNA polymerase I"/>
    <property type="evidence" value="ECO:0000250"/>
    <property type="project" value="UniProtKB"/>
</dbReference>
<dbReference type="InterPro" id="IPR042859">
    <property type="entry name" value="NOL11"/>
</dbReference>
<dbReference type="InterPro" id="IPR048897">
    <property type="entry name" value="Nol11_C"/>
</dbReference>
<dbReference type="InterPro" id="IPR012584">
    <property type="entry name" value="NOL11_N"/>
</dbReference>
<dbReference type="PANTHER" id="PTHR15633">
    <property type="entry name" value="NUCLEOLAR PROTEIN 11"/>
    <property type="match status" value="1"/>
</dbReference>
<dbReference type="PANTHER" id="PTHR15633:SF2">
    <property type="entry name" value="NUCLEOLAR PROTEIN 11"/>
    <property type="match status" value="1"/>
</dbReference>
<dbReference type="Pfam" id="PF20998">
    <property type="entry name" value="Nol11_C"/>
    <property type="match status" value="1"/>
</dbReference>
<dbReference type="Pfam" id="PF08168">
    <property type="entry name" value="NOL11_N"/>
    <property type="match status" value="1"/>
</dbReference>
<accession>Q6INI5</accession>
<accession>Q52L03</accession>
<organism>
    <name type="scientific">Xenopus laevis</name>
    <name type="common">African clawed frog</name>
    <dbReference type="NCBI Taxonomy" id="8355"/>
    <lineage>
        <taxon>Eukaryota</taxon>
        <taxon>Metazoa</taxon>
        <taxon>Chordata</taxon>
        <taxon>Craniata</taxon>
        <taxon>Vertebrata</taxon>
        <taxon>Euteleostomi</taxon>
        <taxon>Amphibia</taxon>
        <taxon>Batrachia</taxon>
        <taxon>Anura</taxon>
        <taxon>Pipoidea</taxon>
        <taxon>Pipidae</taxon>
        <taxon>Xenopodinae</taxon>
        <taxon>Xenopus</taxon>
        <taxon>Xenopus</taxon>
    </lineage>
</organism>